<feature type="chain" id="PRO_0000113427" description="Malate dehydrogenase">
    <location>
        <begin position="1"/>
        <end position="313"/>
    </location>
</feature>
<feature type="active site" description="Proton acceptor" evidence="1">
    <location>
        <position position="176"/>
    </location>
</feature>
<feature type="binding site" evidence="1">
    <location>
        <begin position="8"/>
        <end position="13"/>
    </location>
    <ligand>
        <name>NAD(+)</name>
        <dbReference type="ChEBI" id="CHEBI:57540"/>
    </ligand>
</feature>
<feature type="binding site" evidence="1">
    <location>
        <position position="33"/>
    </location>
    <ligand>
        <name>NAD(+)</name>
        <dbReference type="ChEBI" id="CHEBI:57540"/>
    </ligand>
</feature>
<feature type="binding site" evidence="1">
    <location>
        <position position="83"/>
    </location>
    <ligand>
        <name>substrate</name>
    </ligand>
</feature>
<feature type="binding site" evidence="1">
    <location>
        <position position="89"/>
    </location>
    <ligand>
        <name>substrate</name>
    </ligand>
</feature>
<feature type="binding site" evidence="1">
    <location>
        <position position="96"/>
    </location>
    <ligand>
        <name>NAD(+)</name>
        <dbReference type="ChEBI" id="CHEBI:57540"/>
    </ligand>
</feature>
<feature type="binding site" evidence="1">
    <location>
        <begin position="119"/>
        <end position="121"/>
    </location>
    <ligand>
        <name>NAD(+)</name>
        <dbReference type="ChEBI" id="CHEBI:57540"/>
    </ligand>
</feature>
<feature type="binding site" evidence="1">
    <location>
        <position position="121"/>
    </location>
    <ligand>
        <name>substrate</name>
    </ligand>
</feature>
<feature type="binding site" evidence="1">
    <location>
        <position position="152"/>
    </location>
    <ligand>
        <name>substrate</name>
    </ligand>
</feature>
<reference key="1">
    <citation type="journal article" date="2005" name="Science">
        <title>Extensive DNA inversions in the B. fragilis genome control variable gene expression.</title>
        <authorList>
            <person name="Cerdeno-Tarraga A.-M."/>
            <person name="Patrick S."/>
            <person name="Crossman L.C."/>
            <person name="Blakely G."/>
            <person name="Abratt V."/>
            <person name="Lennard N."/>
            <person name="Poxton I."/>
            <person name="Duerden B."/>
            <person name="Harris B."/>
            <person name="Quail M.A."/>
            <person name="Barron A."/>
            <person name="Clark L."/>
            <person name="Corton C."/>
            <person name="Doggett J."/>
            <person name="Holden M.T.G."/>
            <person name="Larke N."/>
            <person name="Line A."/>
            <person name="Lord A."/>
            <person name="Norbertczak H."/>
            <person name="Ormond D."/>
            <person name="Price C."/>
            <person name="Rabbinowitsch E."/>
            <person name="Woodward J."/>
            <person name="Barrell B.G."/>
            <person name="Parkhill J."/>
        </authorList>
    </citation>
    <scope>NUCLEOTIDE SEQUENCE [LARGE SCALE GENOMIC DNA]</scope>
    <source>
        <strain>ATCC 25285 / DSM 2151 / CCUG 4856 / JCM 11019 / LMG 10263 / NCTC 9343 / Onslow / VPI 2553 / EN-2</strain>
    </source>
</reference>
<sequence length="313" mass="32676">MSKVTVVGAGNVGATCANVLAFNEVADEVVMLDVKEGVSEGKAMDMMQTAQLLGFDTTIVGCTNDYAQTANSDVVVITSGIPRKPGMTREELIGVNAGIVKSVAENLLKYSPNAIIVVISNPMDTMTYLALKSLGLPKNRVIGMGGALDSSRFKYFLSQALGCNANEVEGMVIGGHGDTTMIPLARLATYKGQPVSTLLSEEKLNEVVASTMVGGATLTKLLGTSAWYAPGAAGAYVVESIIHNQKKMVPCSVMLEGEYGESDLCIGVPVILGKNGIEKIVELELNADEKAKFAASAAAVHKTNAALKEVGAL</sequence>
<proteinExistence type="inferred from homology"/>
<accession>Q5L8Z8</accession>
<keyword id="KW-0520">NAD</keyword>
<keyword id="KW-0560">Oxidoreductase</keyword>
<keyword id="KW-0816">Tricarboxylic acid cycle</keyword>
<comment type="function">
    <text evidence="1">Catalyzes the reversible oxidation of malate to oxaloacetate.</text>
</comment>
<comment type="catalytic activity">
    <reaction evidence="1">
        <text>(S)-malate + NAD(+) = oxaloacetate + NADH + H(+)</text>
        <dbReference type="Rhea" id="RHEA:21432"/>
        <dbReference type="ChEBI" id="CHEBI:15378"/>
        <dbReference type="ChEBI" id="CHEBI:15589"/>
        <dbReference type="ChEBI" id="CHEBI:16452"/>
        <dbReference type="ChEBI" id="CHEBI:57540"/>
        <dbReference type="ChEBI" id="CHEBI:57945"/>
        <dbReference type="EC" id="1.1.1.37"/>
    </reaction>
</comment>
<comment type="similarity">
    <text evidence="1">Belongs to the LDH/MDH superfamily. MDH type 3 family.</text>
</comment>
<gene>
    <name evidence="1" type="primary">mdh</name>
    <name type="ordered locus">BF3753</name>
</gene>
<protein>
    <recommendedName>
        <fullName evidence="1">Malate dehydrogenase</fullName>
        <ecNumber evidence="1">1.1.1.37</ecNumber>
    </recommendedName>
</protein>
<name>MDH_BACFN</name>
<organism>
    <name type="scientific">Bacteroides fragilis (strain ATCC 25285 / DSM 2151 / CCUG 4856 / JCM 11019 / LMG 10263 / NCTC 9343 / Onslow / VPI 2553 / EN-2)</name>
    <dbReference type="NCBI Taxonomy" id="272559"/>
    <lineage>
        <taxon>Bacteria</taxon>
        <taxon>Pseudomonadati</taxon>
        <taxon>Bacteroidota</taxon>
        <taxon>Bacteroidia</taxon>
        <taxon>Bacteroidales</taxon>
        <taxon>Bacteroidaceae</taxon>
        <taxon>Bacteroides</taxon>
    </lineage>
</organism>
<evidence type="ECO:0000255" key="1">
    <source>
        <dbReference type="HAMAP-Rule" id="MF_00487"/>
    </source>
</evidence>
<dbReference type="EC" id="1.1.1.37" evidence="1"/>
<dbReference type="EMBL" id="CR626927">
    <property type="protein sequence ID" value="CAH09434.1"/>
    <property type="molecule type" value="Genomic_DNA"/>
</dbReference>
<dbReference type="RefSeq" id="WP_005791692.1">
    <property type="nucleotide sequence ID" value="NZ_UFTH01000001.1"/>
</dbReference>
<dbReference type="SMR" id="Q5L8Z8"/>
<dbReference type="PaxDb" id="272559-BF9343_3653"/>
<dbReference type="GeneID" id="60366767"/>
<dbReference type="KEGG" id="bfs:BF9343_3653"/>
<dbReference type="eggNOG" id="COG0039">
    <property type="taxonomic scope" value="Bacteria"/>
</dbReference>
<dbReference type="HOGENOM" id="CLU_045401_2_1_10"/>
<dbReference type="Proteomes" id="UP000006731">
    <property type="component" value="Chromosome"/>
</dbReference>
<dbReference type="GO" id="GO:0004459">
    <property type="term" value="F:L-lactate dehydrogenase activity"/>
    <property type="evidence" value="ECO:0007669"/>
    <property type="project" value="TreeGrafter"/>
</dbReference>
<dbReference type="GO" id="GO:0030060">
    <property type="term" value="F:L-malate dehydrogenase (NAD+) activity"/>
    <property type="evidence" value="ECO:0007669"/>
    <property type="project" value="UniProtKB-UniRule"/>
</dbReference>
<dbReference type="GO" id="GO:0006089">
    <property type="term" value="P:lactate metabolic process"/>
    <property type="evidence" value="ECO:0007669"/>
    <property type="project" value="TreeGrafter"/>
</dbReference>
<dbReference type="GO" id="GO:0006099">
    <property type="term" value="P:tricarboxylic acid cycle"/>
    <property type="evidence" value="ECO:0007669"/>
    <property type="project" value="UniProtKB-UniRule"/>
</dbReference>
<dbReference type="CDD" id="cd01339">
    <property type="entry name" value="LDH-like_MDH"/>
    <property type="match status" value="1"/>
</dbReference>
<dbReference type="FunFam" id="3.40.50.720:FF:000018">
    <property type="entry name" value="Malate dehydrogenase"/>
    <property type="match status" value="1"/>
</dbReference>
<dbReference type="FunFam" id="3.90.110.10:FF:000004">
    <property type="entry name" value="Malate dehydrogenase"/>
    <property type="match status" value="1"/>
</dbReference>
<dbReference type="Gene3D" id="3.90.110.10">
    <property type="entry name" value="Lactate dehydrogenase/glycoside hydrolase, family 4, C-terminal"/>
    <property type="match status" value="1"/>
</dbReference>
<dbReference type="Gene3D" id="3.40.50.720">
    <property type="entry name" value="NAD(P)-binding Rossmann-like Domain"/>
    <property type="match status" value="1"/>
</dbReference>
<dbReference type="HAMAP" id="MF_00487">
    <property type="entry name" value="Malate_dehydrog_3"/>
    <property type="match status" value="1"/>
</dbReference>
<dbReference type="InterPro" id="IPR001557">
    <property type="entry name" value="L-lactate/malate_DH"/>
</dbReference>
<dbReference type="InterPro" id="IPR022383">
    <property type="entry name" value="Lactate/malate_DH_C"/>
</dbReference>
<dbReference type="InterPro" id="IPR001236">
    <property type="entry name" value="Lactate/malate_DH_N"/>
</dbReference>
<dbReference type="InterPro" id="IPR015955">
    <property type="entry name" value="Lactate_DH/Glyco_Ohase_4_C"/>
</dbReference>
<dbReference type="InterPro" id="IPR011275">
    <property type="entry name" value="Malate_DH_type3"/>
</dbReference>
<dbReference type="InterPro" id="IPR036291">
    <property type="entry name" value="NAD(P)-bd_dom_sf"/>
</dbReference>
<dbReference type="NCBIfam" id="TIGR01763">
    <property type="entry name" value="MalateDH_bact"/>
    <property type="match status" value="1"/>
</dbReference>
<dbReference type="NCBIfam" id="NF004863">
    <property type="entry name" value="PRK06223.1"/>
    <property type="match status" value="1"/>
</dbReference>
<dbReference type="PANTHER" id="PTHR43128">
    <property type="entry name" value="L-2-HYDROXYCARBOXYLATE DEHYDROGENASE (NAD(P)(+))"/>
    <property type="match status" value="1"/>
</dbReference>
<dbReference type="PANTHER" id="PTHR43128:SF16">
    <property type="entry name" value="L-LACTATE DEHYDROGENASE"/>
    <property type="match status" value="1"/>
</dbReference>
<dbReference type="Pfam" id="PF02866">
    <property type="entry name" value="Ldh_1_C"/>
    <property type="match status" value="1"/>
</dbReference>
<dbReference type="Pfam" id="PF00056">
    <property type="entry name" value="Ldh_1_N"/>
    <property type="match status" value="1"/>
</dbReference>
<dbReference type="PIRSF" id="PIRSF000102">
    <property type="entry name" value="Lac_mal_DH"/>
    <property type="match status" value="1"/>
</dbReference>
<dbReference type="PRINTS" id="PR00086">
    <property type="entry name" value="LLDHDRGNASE"/>
</dbReference>
<dbReference type="SUPFAM" id="SSF56327">
    <property type="entry name" value="LDH C-terminal domain-like"/>
    <property type="match status" value="1"/>
</dbReference>
<dbReference type="SUPFAM" id="SSF51735">
    <property type="entry name" value="NAD(P)-binding Rossmann-fold domains"/>
    <property type="match status" value="1"/>
</dbReference>